<proteinExistence type="inferred from homology"/>
<dbReference type="EMBL" id="L08171">
    <property type="protein sequence ID" value="AAA25375.1"/>
    <property type="molecule type" value="Genomic_DNA"/>
</dbReference>
<dbReference type="PIR" id="S35537">
    <property type="entry name" value="S35537"/>
</dbReference>
<dbReference type="RefSeq" id="WP_007767794.1">
    <property type="nucleotide sequence ID" value="NZ_NSFE01000027.1"/>
</dbReference>
<dbReference type="SMR" id="P33565"/>
<dbReference type="GeneID" id="77300164"/>
<dbReference type="OMA" id="VCIRVYT"/>
<dbReference type="OrthoDB" id="9802366at2"/>
<dbReference type="GO" id="GO:0015935">
    <property type="term" value="C:small ribosomal subunit"/>
    <property type="evidence" value="ECO:0007669"/>
    <property type="project" value="InterPro"/>
</dbReference>
<dbReference type="GO" id="GO:0019843">
    <property type="term" value="F:rRNA binding"/>
    <property type="evidence" value="ECO:0007669"/>
    <property type="project" value="UniProtKB-UniRule"/>
</dbReference>
<dbReference type="GO" id="GO:0003735">
    <property type="term" value="F:structural constituent of ribosome"/>
    <property type="evidence" value="ECO:0007669"/>
    <property type="project" value="InterPro"/>
</dbReference>
<dbReference type="GO" id="GO:0000049">
    <property type="term" value="F:tRNA binding"/>
    <property type="evidence" value="ECO:0007669"/>
    <property type="project" value="UniProtKB-UniRule"/>
</dbReference>
<dbReference type="GO" id="GO:0006412">
    <property type="term" value="P:translation"/>
    <property type="evidence" value="ECO:0007669"/>
    <property type="project" value="UniProtKB-UniRule"/>
</dbReference>
<dbReference type="CDD" id="cd03368">
    <property type="entry name" value="Ribosomal_S12"/>
    <property type="match status" value="1"/>
</dbReference>
<dbReference type="FunFam" id="2.40.50.140:FF:000001">
    <property type="entry name" value="30S ribosomal protein S12"/>
    <property type="match status" value="1"/>
</dbReference>
<dbReference type="Gene3D" id="2.40.50.140">
    <property type="entry name" value="Nucleic acid-binding proteins"/>
    <property type="match status" value="1"/>
</dbReference>
<dbReference type="HAMAP" id="MF_00403_B">
    <property type="entry name" value="Ribosomal_uS12_B"/>
    <property type="match status" value="1"/>
</dbReference>
<dbReference type="InterPro" id="IPR012340">
    <property type="entry name" value="NA-bd_OB-fold"/>
</dbReference>
<dbReference type="InterPro" id="IPR006032">
    <property type="entry name" value="Ribosomal_uS12"/>
</dbReference>
<dbReference type="InterPro" id="IPR005679">
    <property type="entry name" value="Ribosomal_uS12_bac"/>
</dbReference>
<dbReference type="NCBIfam" id="TIGR00981">
    <property type="entry name" value="rpsL_bact"/>
    <property type="match status" value="1"/>
</dbReference>
<dbReference type="PANTHER" id="PTHR11652">
    <property type="entry name" value="30S RIBOSOMAL PROTEIN S12 FAMILY MEMBER"/>
    <property type="match status" value="1"/>
</dbReference>
<dbReference type="Pfam" id="PF00164">
    <property type="entry name" value="Ribosom_S12_S23"/>
    <property type="match status" value="1"/>
</dbReference>
<dbReference type="PIRSF" id="PIRSF002133">
    <property type="entry name" value="Ribosomal_S12/S23"/>
    <property type="match status" value="1"/>
</dbReference>
<dbReference type="PRINTS" id="PR01034">
    <property type="entry name" value="RIBOSOMALS12"/>
</dbReference>
<dbReference type="SUPFAM" id="SSF50249">
    <property type="entry name" value="Nucleic acid-binding proteins"/>
    <property type="match status" value="1"/>
</dbReference>
<dbReference type="PROSITE" id="PS00055">
    <property type="entry name" value="RIBOSOMAL_S12"/>
    <property type="match status" value="1"/>
</dbReference>
<evidence type="ECO:0000250" key="1"/>
<evidence type="ECO:0000255" key="2">
    <source>
        <dbReference type="HAMAP-Rule" id="MF_00403"/>
    </source>
</evidence>
<evidence type="ECO:0000256" key="3">
    <source>
        <dbReference type="SAM" id="MobiDB-lite"/>
    </source>
</evidence>
<evidence type="ECO:0000305" key="4"/>
<name>RS12_MYCIT</name>
<reference key="1">
    <citation type="journal article" date="1993" name="Nucleic Acids Res.">
        <title>Nucleotide sequence analysis of the ribosomal S12 gene of Mycobacterium intracellulare.</title>
        <authorList>
            <person name="Nair J."/>
            <person name="Rouse D.A."/>
            <person name="Morris S.L."/>
        </authorList>
    </citation>
    <scope>NUCLEOTIDE SEQUENCE [GENOMIC DNA]</scope>
</reference>
<feature type="chain" id="PRO_0000146262" description="Small ribosomal subunit protein uS12">
    <location>
        <begin position="1"/>
        <end position="124"/>
    </location>
</feature>
<feature type="region of interest" description="Disordered" evidence="3">
    <location>
        <begin position="1"/>
        <end position="30"/>
    </location>
</feature>
<feature type="region of interest" description="Disordered" evidence="3">
    <location>
        <begin position="105"/>
        <end position="124"/>
    </location>
</feature>
<feature type="compositionally biased region" description="Basic residues" evidence="3">
    <location>
        <begin position="108"/>
        <end position="118"/>
    </location>
</feature>
<feature type="modified residue" description="3-methylthioaspartic acid" evidence="1">
    <location>
        <position position="89"/>
    </location>
</feature>
<organism>
    <name type="scientific">Mycobacterium intracellulare</name>
    <dbReference type="NCBI Taxonomy" id="1767"/>
    <lineage>
        <taxon>Bacteria</taxon>
        <taxon>Bacillati</taxon>
        <taxon>Actinomycetota</taxon>
        <taxon>Actinomycetes</taxon>
        <taxon>Mycobacteriales</taxon>
        <taxon>Mycobacteriaceae</taxon>
        <taxon>Mycobacterium</taxon>
        <taxon>Mycobacterium avium complex (MAC)</taxon>
    </lineage>
</organism>
<comment type="function">
    <text evidence="2">With S4 and S5 plays an important role in translational accuracy.</text>
</comment>
<comment type="function">
    <text evidence="2">Interacts with and stabilizes bases of the 16S rRNA that are involved in tRNA selection in the A site and with the mRNA backbone. Located at the interface of the 30S and 50S subunits, it traverses the body of the 30S subunit contacting proteins on the other side and probably holding the rRNA structure together. The combined cluster of proteins S8, S12 and S17 appears to hold together the shoulder and platform of the 30S subunit.</text>
</comment>
<comment type="subunit">
    <text evidence="2">Part of the 30S ribosomal subunit. Contacts proteins S8 and S17. May interact with IF1 in the 30S initiation complex.</text>
</comment>
<comment type="similarity">
    <text evidence="2">Belongs to the universal ribosomal protein uS12 family.</text>
</comment>
<protein>
    <recommendedName>
        <fullName evidence="2">Small ribosomal subunit protein uS12</fullName>
    </recommendedName>
    <alternativeName>
        <fullName evidence="4">30S ribosomal protein S12</fullName>
    </alternativeName>
</protein>
<gene>
    <name evidence="2" type="primary">rpsL</name>
</gene>
<keyword id="KW-0488">Methylation</keyword>
<keyword id="KW-0687">Ribonucleoprotein</keyword>
<keyword id="KW-0689">Ribosomal protein</keyword>
<keyword id="KW-0694">RNA-binding</keyword>
<keyword id="KW-0699">rRNA-binding</keyword>
<keyword id="KW-0820">tRNA-binding</keyword>
<accession>P33565</accession>
<sequence>MPTIQQLVRKGRRDKVAKVKTAALKGSPQRRGVCTRVYTTTPKKPNSALRKVARVKLTSQVEVTAYIPGEGHNLQEHSMVLVRGGRVKDLPGVRYKIIRGSLDTQGVKNRKQARSRYGAKKEKS</sequence>